<dbReference type="EMBL" id="M33605">
    <property type="protein sequence ID" value="AAA41071.1"/>
    <property type="molecule type" value="mRNA"/>
</dbReference>
<dbReference type="PIR" id="A45818">
    <property type="entry name" value="A45818"/>
</dbReference>
<dbReference type="SMR" id="P35763"/>
<dbReference type="FunCoup" id="P35763">
    <property type="interactions" value="108"/>
</dbReference>
<dbReference type="STRING" id="10116.ENSRNOP00000000681"/>
<dbReference type="TCDB" id="1.C.39.2.1">
    <property type="family name" value="the membrane attack complex/perforin (macpf) family"/>
</dbReference>
<dbReference type="GlyCosmos" id="P35763">
    <property type="glycosylation" value="3 sites, No reported glycans"/>
</dbReference>
<dbReference type="GlyGen" id="P35763">
    <property type="glycosylation" value="3 sites"/>
</dbReference>
<dbReference type="PhosphoSitePlus" id="P35763"/>
<dbReference type="PaxDb" id="10116-ENSRNOP00000000681"/>
<dbReference type="AGR" id="RGD:708463"/>
<dbReference type="RGD" id="708463">
    <property type="gene designation" value="Prf1"/>
</dbReference>
<dbReference type="eggNOG" id="ENOG502RQWS">
    <property type="taxonomic scope" value="Eukaryota"/>
</dbReference>
<dbReference type="InParanoid" id="P35763"/>
<dbReference type="PhylomeDB" id="P35763"/>
<dbReference type="PRO" id="PR:P35763"/>
<dbReference type="Proteomes" id="UP000002494">
    <property type="component" value="Unplaced"/>
</dbReference>
<dbReference type="GO" id="GO:0044194">
    <property type="term" value="C:cytolytic granule"/>
    <property type="evidence" value="ECO:0000250"/>
    <property type="project" value="UniProtKB"/>
</dbReference>
<dbReference type="GO" id="GO:0031410">
    <property type="term" value="C:cytoplasmic vesicle"/>
    <property type="evidence" value="ECO:0000266"/>
    <property type="project" value="RGD"/>
</dbReference>
<dbReference type="GO" id="GO:0031904">
    <property type="term" value="C:endosome lumen"/>
    <property type="evidence" value="ECO:0007669"/>
    <property type="project" value="UniProtKB-SubCell"/>
</dbReference>
<dbReference type="GO" id="GO:0005615">
    <property type="term" value="C:extracellular space"/>
    <property type="evidence" value="ECO:0000314"/>
    <property type="project" value="RGD"/>
</dbReference>
<dbReference type="GO" id="GO:0001772">
    <property type="term" value="C:immunological synapse"/>
    <property type="evidence" value="ECO:0000266"/>
    <property type="project" value="RGD"/>
</dbReference>
<dbReference type="GO" id="GO:0016020">
    <property type="term" value="C:membrane"/>
    <property type="evidence" value="ECO:0000250"/>
    <property type="project" value="UniProtKB"/>
</dbReference>
<dbReference type="GO" id="GO:0005886">
    <property type="term" value="C:plasma membrane"/>
    <property type="evidence" value="ECO:0000266"/>
    <property type="project" value="RGD"/>
</dbReference>
<dbReference type="GO" id="GO:0005509">
    <property type="term" value="F:calcium ion binding"/>
    <property type="evidence" value="ECO:0000250"/>
    <property type="project" value="UniProtKB"/>
</dbReference>
<dbReference type="GO" id="GO:0042802">
    <property type="term" value="F:identical protein binding"/>
    <property type="evidence" value="ECO:0000266"/>
    <property type="project" value="RGD"/>
</dbReference>
<dbReference type="GO" id="GO:0140911">
    <property type="term" value="F:pore-forming activity"/>
    <property type="evidence" value="ECO:0007669"/>
    <property type="project" value="InterPro"/>
</dbReference>
<dbReference type="GO" id="GO:0022829">
    <property type="term" value="F:wide pore channel activity"/>
    <property type="evidence" value="ECO:0000250"/>
    <property type="project" value="UniProtKB"/>
</dbReference>
<dbReference type="GO" id="GO:0007623">
    <property type="term" value="P:circadian rhythm"/>
    <property type="evidence" value="ECO:0000315"/>
    <property type="project" value="RGD"/>
</dbReference>
<dbReference type="GO" id="GO:0002357">
    <property type="term" value="P:defense response to tumor cell"/>
    <property type="evidence" value="ECO:0000250"/>
    <property type="project" value="UniProtKB"/>
</dbReference>
<dbReference type="GO" id="GO:0051607">
    <property type="term" value="P:defense response to virus"/>
    <property type="evidence" value="ECO:0000250"/>
    <property type="project" value="UniProtKB"/>
</dbReference>
<dbReference type="GO" id="GO:0140507">
    <property type="term" value="P:granzyme-mediated programmed cell death signaling pathway"/>
    <property type="evidence" value="ECO:0000266"/>
    <property type="project" value="RGD"/>
</dbReference>
<dbReference type="GO" id="GO:0002418">
    <property type="term" value="P:immune response to tumor cell"/>
    <property type="evidence" value="ECO:0000250"/>
    <property type="project" value="UniProtKB"/>
</dbReference>
<dbReference type="GO" id="GO:0001771">
    <property type="term" value="P:immunological synapse formation"/>
    <property type="evidence" value="ECO:0000266"/>
    <property type="project" value="RGD"/>
</dbReference>
<dbReference type="GO" id="GO:0031640">
    <property type="term" value="P:killing of cells of another organism"/>
    <property type="evidence" value="ECO:0007669"/>
    <property type="project" value="UniProtKB-KW"/>
</dbReference>
<dbReference type="GO" id="GO:0051712">
    <property type="term" value="P:positive regulation of killing of cells of another organism"/>
    <property type="evidence" value="ECO:0000266"/>
    <property type="project" value="RGD"/>
</dbReference>
<dbReference type="GO" id="GO:0051260">
    <property type="term" value="P:protein homooligomerization"/>
    <property type="evidence" value="ECO:0000250"/>
    <property type="project" value="UniProtKB"/>
</dbReference>
<dbReference type="GO" id="GO:0017038">
    <property type="term" value="P:protein import"/>
    <property type="evidence" value="ECO:0000266"/>
    <property type="project" value="RGD"/>
</dbReference>
<dbReference type="GO" id="GO:0009306">
    <property type="term" value="P:protein secretion"/>
    <property type="evidence" value="ECO:0000266"/>
    <property type="project" value="RGD"/>
</dbReference>
<dbReference type="GO" id="GO:0071806">
    <property type="term" value="P:protein transmembrane transport"/>
    <property type="evidence" value="ECO:0000266"/>
    <property type="project" value="RGD"/>
</dbReference>
<dbReference type="GO" id="GO:0045471">
    <property type="term" value="P:response to ethanol"/>
    <property type="evidence" value="ECO:0000270"/>
    <property type="project" value="RGD"/>
</dbReference>
<dbReference type="GO" id="GO:0001913">
    <property type="term" value="P:T cell mediated cytotoxicity"/>
    <property type="evidence" value="ECO:0000266"/>
    <property type="project" value="RGD"/>
</dbReference>
<dbReference type="CDD" id="cd04032">
    <property type="entry name" value="C2_Perforin"/>
    <property type="match status" value="1"/>
</dbReference>
<dbReference type="FunFam" id="2.60.40.150:FF:000216">
    <property type="entry name" value="Perforin-1 precursor"/>
    <property type="match status" value="1"/>
</dbReference>
<dbReference type="Gene3D" id="2.60.40.150">
    <property type="entry name" value="C2 domain"/>
    <property type="match status" value="1"/>
</dbReference>
<dbReference type="InterPro" id="IPR000008">
    <property type="entry name" value="C2_dom"/>
</dbReference>
<dbReference type="InterPro" id="IPR035892">
    <property type="entry name" value="C2_domain_sf"/>
</dbReference>
<dbReference type="InterPro" id="IPR020864">
    <property type="entry name" value="MACPF"/>
</dbReference>
<dbReference type="InterPro" id="IPR020863">
    <property type="entry name" value="MACPF_CS"/>
</dbReference>
<dbReference type="InterPro" id="IPR037300">
    <property type="entry name" value="Perforin-1_C2"/>
</dbReference>
<dbReference type="InterPro" id="IPR052784">
    <property type="entry name" value="Perforin-1_pore-forming"/>
</dbReference>
<dbReference type="PANTHER" id="PTHR46096">
    <property type="entry name" value="PERFORIN-1"/>
    <property type="match status" value="1"/>
</dbReference>
<dbReference type="PANTHER" id="PTHR46096:SF3">
    <property type="entry name" value="PERFORIN-1"/>
    <property type="match status" value="1"/>
</dbReference>
<dbReference type="Pfam" id="PF00168">
    <property type="entry name" value="C2"/>
    <property type="match status" value="1"/>
</dbReference>
<dbReference type="Pfam" id="PF01823">
    <property type="entry name" value="MACPF"/>
    <property type="match status" value="1"/>
</dbReference>
<dbReference type="SMART" id="SM00239">
    <property type="entry name" value="C2"/>
    <property type="match status" value="1"/>
</dbReference>
<dbReference type="SMART" id="SM00457">
    <property type="entry name" value="MACPF"/>
    <property type="match status" value="1"/>
</dbReference>
<dbReference type="SUPFAM" id="SSF49562">
    <property type="entry name" value="C2 domain (Calcium/lipid-binding domain, CaLB)"/>
    <property type="match status" value="1"/>
</dbReference>
<dbReference type="PROSITE" id="PS50004">
    <property type="entry name" value="C2"/>
    <property type="match status" value="1"/>
</dbReference>
<dbReference type="PROSITE" id="PS00279">
    <property type="entry name" value="MACPF_1"/>
    <property type="match status" value="1"/>
</dbReference>
<dbReference type="PROSITE" id="PS51412">
    <property type="entry name" value="MACPF_2"/>
    <property type="match status" value="1"/>
</dbReference>
<keyword id="KW-0106">Calcium</keyword>
<keyword id="KW-1003">Cell membrane</keyword>
<keyword id="KW-0204">Cytolysis</keyword>
<keyword id="KW-1015">Disulfide bond</keyword>
<keyword id="KW-0245">EGF-like domain</keyword>
<keyword id="KW-0967">Endosome</keyword>
<keyword id="KW-0325">Glycoprotein</keyword>
<keyword id="KW-0458">Lysosome</keyword>
<keyword id="KW-0472">Membrane</keyword>
<keyword id="KW-0479">Metal-binding</keyword>
<keyword id="KW-1185">Reference proteome</keyword>
<keyword id="KW-0964">Secreted</keyword>
<keyword id="KW-0732">Signal</keyword>
<keyword id="KW-0812">Transmembrane</keyword>
<keyword id="KW-1134">Transmembrane beta strand</keyword>
<sequence>MAAYLFLLGLFLLLPRPVPAPCYTATRSECKQNHKFVPGVWAAGEGVDVTTLRRSSSFPVNTGKFLRPDRTCTLCKNALMNDGIQRLPVAIAHWRPHGSHCQRNVATTKVSSTEGVAREAAANINNDWRAGLDVNPKPEANVHVSVAGSHSKIANFAAEKAHQDQYNFNTDTVECRMYSFRLAQKPPLHPDFRKALKNLPHNFNSSTEHAYRRLISSYGTHFITAVDLGGRVSVLTALRTCQLTLDGLTADEVGDCLSVEAQVSIGAQASVSSEYKACEEKKKQHKIATSFHQTYRERHVEVLGGPLDSSNDLLFGNQATPEHFSTWIASLPTRPDVVDYSLEPLHILLEDSDPKREALRQAISHYVMSRARWRDCNRPCRAGQHKSSRDSCQCVCQDSNVTNQDCCPRQRGLAKLMVRNFQAKGLWGDYITSTDAYLKVFFGGQEIRTGVVWNNNHPSWSDKMDFGNVLLSTGGPLRVQVWDADNGWDDDLLGTCDKSPKSGFHEVNCPLNHGSIKFIYQANCLPDLTGETCLEYAPQGLLGDPRGNRSGAVW</sequence>
<organism>
    <name type="scientific">Rattus norvegicus</name>
    <name type="common">Rat</name>
    <dbReference type="NCBI Taxonomy" id="10116"/>
    <lineage>
        <taxon>Eukaryota</taxon>
        <taxon>Metazoa</taxon>
        <taxon>Chordata</taxon>
        <taxon>Craniata</taxon>
        <taxon>Vertebrata</taxon>
        <taxon>Euteleostomi</taxon>
        <taxon>Mammalia</taxon>
        <taxon>Eutheria</taxon>
        <taxon>Euarchontoglires</taxon>
        <taxon>Glires</taxon>
        <taxon>Rodentia</taxon>
        <taxon>Myomorpha</taxon>
        <taxon>Muroidea</taxon>
        <taxon>Muridae</taxon>
        <taxon>Murinae</taxon>
        <taxon>Rattus</taxon>
    </lineage>
</organism>
<name>PERF_RAT</name>
<protein>
    <recommendedName>
        <fullName>Perforin-1</fullName>
        <shortName>P1</shortName>
    </recommendedName>
    <alternativeName>
        <fullName evidence="7">Cytolysin</fullName>
    </alternativeName>
    <alternativeName>
        <fullName>Lymphocyte pore-forming protein</fullName>
    </alternativeName>
</protein>
<comment type="function">
    <text evidence="1 2 6">Pore-forming protein that plays a key role in granzyme-mediated programmed cell death, and in defense against virus-infected or neoplastic cells (PubMed:2809217). Can insert into the membrane of target cells in its calcium-bound form, oligomerize and form large pores (By similarity). Promotes cytolysis and apoptosis of target cells by mediating the passage and uptake of cytotoxic granzymes (By similarity). Facilitates the delivery of cationic cargo protein, while anionic or neural proteins are not delivered efficiently (By similarity). Perforin pores allow the release of mature caspase-7 (CASP7) into the extracellular milieu (By similarity).</text>
</comment>
<comment type="cofactor">
    <cofactor evidence="4">
        <name>Ca(2+)</name>
        <dbReference type="ChEBI" id="CHEBI:29108"/>
    </cofactor>
</comment>
<comment type="subunit">
    <text evidence="1">Monomer, as soluble protein. Homooligomer; homooligomerizes to form a pore-forming ring.</text>
</comment>
<comment type="subcellular location">
    <subcellularLocation>
        <location evidence="6">Cytolytic granule</location>
    </subcellularLocation>
    <subcellularLocation>
        <location evidence="6">Secreted</location>
    </subcellularLocation>
    <subcellularLocation>
        <location evidence="6">Cell membrane</location>
        <topology evidence="6">Multi-pass membrane protein</topology>
    </subcellularLocation>
    <subcellularLocation>
        <location evidence="2">Endosome lumen</location>
    </subcellularLocation>
    <text evidence="2">Stored in cytolytic granules of cytolytic T-lymphocytes and secreted into the cleft between T-lymphocyte and target cell. Inserts into the cell membrane of target cells and forms pores. Membrane insertion and pore formation requires a major conformation change. May be taken up via endocytosis involving clathrin-coated vesicles and accumulate in a first time in large early endosomes (By similarity).</text>
</comment>
<comment type="tissue specificity">
    <text evidence="6">Detected in large granular lymphocytes and lymphokine-activated killer cells.</text>
</comment>
<comment type="domain">
    <text evidence="1">Perforin consists of three domains: (1) the MACPF domain, which includes the central machinery of pore formation, (2) the EGF-like domain, which forms a 'shelf-like' assembly connecting the MACPF and C2 domains, and (3) the C2 domain, which mediates calcium-dependent binding to lipid membranes. The C2 domain is critical for initial calcium-dependent interaction with lipid membranes of the target cell: calcium-binding causes a significant structural rearrangement, leading to oligomerization and deployment of the two transmembrane beta-strands (named CH1/TMH1 and CH2/TMH2) that enter the membrane as amphipathic beta-hairpins. The third calcium-binding site (Ca(2+) 3), which constitutes the weakest affinity site, triggers structural rearrangements in the C2 domain that facilitate its interaction with lipid membranes.</text>
</comment>
<comment type="PTM">
    <text evidence="1">N-glycosylated.</text>
</comment>
<comment type="similarity">
    <text evidence="8">Belongs to the complement C6/C7/C8/C9 family.</text>
</comment>
<evidence type="ECO:0000250" key="1">
    <source>
        <dbReference type="UniProtKB" id="P10820"/>
    </source>
</evidence>
<evidence type="ECO:0000250" key="2">
    <source>
        <dbReference type="UniProtKB" id="P14222"/>
    </source>
</evidence>
<evidence type="ECO:0000255" key="3"/>
<evidence type="ECO:0000255" key="4">
    <source>
        <dbReference type="PROSITE-ProRule" id="PRU00041"/>
    </source>
</evidence>
<evidence type="ECO:0000255" key="5">
    <source>
        <dbReference type="PROSITE-ProRule" id="PRU00745"/>
    </source>
</evidence>
<evidence type="ECO:0000269" key="6">
    <source>
    </source>
</evidence>
<evidence type="ECO:0000303" key="7">
    <source>
    </source>
</evidence>
<evidence type="ECO:0000305" key="8"/>
<gene>
    <name type="primary">Prf1</name>
    <name type="synonym">Pfp</name>
</gene>
<proteinExistence type="evidence at transcript level"/>
<feature type="signal peptide" evidence="1">
    <location>
        <begin position="1"/>
        <end position="20"/>
    </location>
</feature>
<feature type="chain" id="PRO_0000023611" description="Perforin-1">
    <location>
        <begin position="21"/>
        <end position="554"/>
    </location>
</feature>
<feature type="transmembrane region" description="Beta stranded; Name=CH1" evidence="1">
    <location>
        <begin position="128"/>
        <end position="148"/>
    </location>
</feature>
<feature type="transmembrane region" description="Beta stranded; Name=CH2" evidence="1">
    <location>
        <begin position="256"/>
        <end position="278"/>
    </location>
</feature>
<feature type="domain" description="MACPF" evidence="5">
    <location>
        <begin position="26"/>
        <end position="374"/>
    </location>
</feature>
<feature type="domain" description="EGF-like">
    <location>
        <begin position="375"/>
        <end position="407"/>
    </location>
</feature>
<feature type="domain" description="C2" evidence="4">
    <location>
        <begin position="395"/>
        <end position="513"/>
    </location>
</feature>
<feature type="binding site" evidence="1">
    <location>
        <position position="428"/>
    </location>
    <ligand>
        <name>Ca(2+)</name>
        <dbReference type="ChEBI" id="CHEBI:29108"/>
        <label>1</label>
    </ligand>
</feature>
<feature type="binding site" evidence="1">
    <location>
        <position position="429"/>
    </location>
    <ligand>
        <name>Ca(2+)</name>
        <dbReference type="ChEBI" id="CHEBI:29108"/>
        <label>1</label>
    </ligand>
</feature>
<feature type="binding site" evidence="1">
    <location>
        <position position="429"/>
    </location>
    <ligand>
        <name>Ca(2+)</name>
        <dbReference type="ChEBI" id="CHEBI:29108"/>
        <label>2</label>
    </ligand>
</feature>
<feature type="binding site" evidence="1">
    <location>
        <position position="429"/>
    </location>
    <ligand>
        <name>Ca(2+)</name>
        <dbReference type="ChEBI" id="CHEBI:29108"/>
        <label>3</label>
    </ligand>
</feature>
<feature type="binding site" evidence="1">
    <location>
        <position position="432"/>
    </location>
    <ligand>
        <name>Ca(2+)</name>
        <dbReference type="ChEBI" id="CHEBI:29108"/>
        <label>2</label>
    </ligand>
</feature>
<feature type="binding site" evidence="1">
    <location>
        <position position="435"/>
    </location>
    <ligand>
        <name>Ca(2+)</name>
        <dbReference type="ChEBI" id="CHEBI:29108"/>
        <label>2</label>
    </ligand>
</feature>
<feature type="binding site" evidence="1">
    <location>
        <position position="435"/>
    </location>
    <ligand>
        <name>Ca(2+)</name>
        <dbReference type="ChEBI" id="CHEBI:29108"/>
        <label>3</label>
    </ligand>
</feature>
<feature type="binding site" evidence="1">
    <location>
        <position position="454"/>
    </location>
    <ligand>
        <name>Ca(2+)</name>
        <dbReference type="ChEBI" id="CHEBI:29108"/>
        <label>2</label>
    </ligand>
</feature>
<feature type="binding site" evidence="1">
    <location>
        <position position="483"/>
    </location>
    <ligand>
        <name>Ca(2+)</name>
        <dbReference type="ChEBI" id="CHEBI:29108"/>
        <label>1</label>
    </ligand>
</feature>
<feature type="binding site" evidence="1">
    <location>
        <position position="483"/>
    </location>
    <ligand>
        <name>Ca(2+)</name>
        <dbReference type="ChEBI" id="CHEBI:29108"/>
        <label>3</label>
    </ligand>
</feature>
<feature type="binding site" evidence="1">
    <location>
        <position position="484"/>
    </location>
    <ligand>
        <name>Ca(2+)</name>
        <dbReference type="ChEBI" id="CHEBI:29108"/>
        <label>3</label>
    </ligand>
</feature>
<feature type="binding site" evidence="1">
    <location>
        <position position="485"/>
    </location>
    <ligand>
        <name>Ca(2+)</name>
        <dbReference type="ChEBI" id="CHEBI:29108"/>
        <label>1</label>
    </ligand>
</feature>
<feature type="binding site" evidence="1">
    <location>
        <position position="485"/>
    </location>
    <ligand>
        <name>Ca(2+)</name>
        <dbReference type="ChEBI" id="CHEBI:29108"/>
        <label>3</label>
    </ligand>
</feature>
<feature type="binding site" evidence="1">
    <location>
        <position position="485"/>
    </location>
    <ligand>
        <name>Ca(2+)</name>
        <dbReference type="ChEBI" id="CHEBI:29108"/>
        <label>4</label>
    </ligand>
</feature>
<feature type="binding site" evidence="1">
    <location>
        <position position="485"/>
    </location>
    <ligand>
        <name>Ca(2+)</name>
        <dbReference type="ChEBI" id="CHEBI:29108"/>
        <label>5</label>
    </ligand>
</feature>
<feature type="binding site" evidence="1">
    <location>
        <position position="488"/>
    </location>
    <ligand>
        <name>Ca(2+)</name>
        <dbReference type="ChEBI" id="CHEBI:29108"/>
        <label>5</label>
    </ligand>
</feature>
<feature type="binding site" evidence="1">
    <location>
        <position position="489"/>
    </location>
    <ligand>
        <name>Ca(2+)</name>
        <dbReference type="ChEBI" id="CHEBI:29108"/>
        <label>4</label>
    </ligand>
</feature>
<feature type="binding site" evidence="1">
    <location>
        <position position="490"/>
    </location>
    <ligand>
        <name>Ca(2+)</name>
        <dbReference type="ChEBI" id="CHEBI:29108"/>
        <label>5</label>
    </ligand>
</feature>
<feature type="binding site" evidence="1">
    <location>
        <position position="491"/>
    </location>
    <ligand>
        <name>Ca(2+)</name>
        <dbReference type="ChEBI" id="CHEBI:29108"/>
        <label>1</label>
    </ligand>
</feature>
<feature type="binding site" evidence="1">
    <location>
        <position position="491"/>
    </location>
    <ligand>
        <name>Ca(2+)</name>
        <dbReference type="ChEBI" id="CHEBI:29108"/>
        <label>4</label>
    </ligand>
</feature>
<feature type="site" description="Important for oligomerization" evidence="1">
    <location>
        <position position="213"/>
    </location>
</feature>
<feature type="site" description="Important for oligomerization" evidence="1">
    <location>
        <position position="343"/>
    </location>
</feature>
<feature type="glycosylation site" description="N-linked (GlcNAc...) asparagine" evidence="3">
    <location>
        <position position="204"/>
    </location>
</feature>
<feature type="glycosylation site" description="N-linked (GlcNAc...) asparagine" evidence="3">
    <location>
        <position position="400"/>
    </location>
</feature>
<feature type="glycosylation site" description="N-linked (GlcNAc...) asparagine" evidence="3">
    <location>
        <position position="548"/>
    </location>
</feature>
<feature type="disulfide bond" evidence="1">
    <location>
        <begin position="22"/>
        <end position="75"/>
    </location>
</feature>
<feature type="disulfide bond" evidence="1">
    <location>
        <begin position="30"/>
        <end position="72"/>
    </location>
</feature>
<feature type="disulfide bond" evidence="1">
    <location>
        <begin position="101"/>
        <end position="175"/>
    </location>
</feature>
<feature type="disulfide bond" evidence="1">
    <location>
        <begin position="241"/>
        <end position="407"/>
    </location>
</feature>
<feature type="disulfide bond" evidence="1">
    <location>
        <begin position="376"/>
        <end position="392"/>
    </location>
</feature>
<feature type="disulfide bond" evidence="1">
    <location>
        <begin position="380"/>
        <end position="394"/>
    </location>
</feature>
<feature type="disulfide bond" evidence="1">
    <location>
        <begin position="396"/>
        <end position="406"/>
    </location>
</feature>
<feature type="disulfide bond" evidence="1">
    <location>
        <begin position="496"/>
        <end position="509"/>
    </location>
</feature>
<feature type="disulfide bond" evidence="1">
    <location>
        <begin position="524"/>
        <end position="533"/>
    </location>
</feature>
<accession>P35763</accession>
<reference key="1">
    <citation type="journal article" date="1989" name="J. Immunol.">
        <title>Molecular cloning of rat cytolysin.</title>
        <authorList>
            <person name="Ishikawa H."/>
            <person name="Shinkai Y."/>
            <person name="Yagita H."/>
            <person name="Yue C.C."/>
            <person name="Henkart P.A."/>
            <person name="Sawada S."/>
            <person name="Young H.A."/>
            <person name="Reynolds C.W."/>
            <person name="Okumura K."/>
        </authorList>
    </citation>
    <scope>NUCLEOTIDE SEQUENCE [MRNA]</scope>
    <scope>FUNCTION</scope>
    <scope>SUBCELLULAR LOCATION</scope>
    <scope>TISSUE SPECIFICITY</scope>
</reference>